<sequence length="332" mass="36685">MAQVWKDAEISLDPIKDQTVAVIGYGIQGDAQANNMKDSGLKVVVGLKEGGSSWKKAASDGHRVLTVAEACKEADIIHVLVPDMIQAQLYRDEMGPNISKGKALSFSHAAAIHWKWIEAPSDVDVIMVAPKGPGSKVRETYLEGFGTPSIVAVEQDSTGGAWDRTLGLGKAIGSARAGLIKTTFKEEVETDWFGEQADLCGGSATMVVSAFETLVEAGYQPEIAYFEVLHELKLIVDMIQKYGINGMWRRVSETARYGGLTRGPMVMDSHTKERMGKVLKEIQDGTFNEEWVSSYRKDGRDAFDKYMKELDSHQIEQVGRKMRKMMWPDSTE</sequence>
<name>ILVC_CENSY</name>
<proteinExistence type="inferred from homology"/>
<reference key="1">
    <citation type="journal article" date="2006" name="Proc. Natl. Acad. Sci. U.S.A.">
        <title>Genomic analysis of the uncultivated marine crenarchaeote Cenarchaeum symbiosum.</title>
        <authorList>
            <person name="Hallam S.J."/>
            <person name="Konstantinidis K.T."/>
            <person name="Putnam N."/>
            <person name="Schleper C."/>
            <person name="Watanabe Y."/>
            <person name="Sugahara J."/>
            <person name="Preston C."/>
            <person name="de la Torre J."/>
            <person name="Richardson P.M."/>
            <person name="DeLong E.F."/>
        </authorList>
    </citation>
    <scope>NUCLEOTIDE SEQUENCE [LARGE SCALE GENOMIC DNA]</scope>
    <source>
        <strain>A</strain>
    </source>
</reference>
<evidence type="ECO:0000255" key="1">
    <source>
        <dbReference type="HAMAP-Rule" id="MF_00435"/>
    </source>
</evidence>
<evidence type="ECO:0000255" key="2">
    <source>
        <dbReference type="PROSITE-ProRule" id="PRU01197"/>
    </source>
</evidence>
<evidence type="ECO:0000255" key="3">
    <source>
        <dbReference type="PROSITE-ProRule" id="PRU01198"/>
    </source>
</evidence>
<gene>
    <name evidence="1" type="primary">ilvC</name>
    <name type="ordered locus">CENSYa_1385</name>
</gene>
<comment type="function">
    <text evidence="1">Involved in the biosynthesis of branched-chain amino acids (BCAA). Catalyzes an alkyl-migration followed by a ketol-acid reduction of (S)-2-acetolactate (S2AL) to yield (R)-2,3-dihydroxy-isovalerate. In the isomerase reaction, S2AL is rearranged via a Mg-dependent methyl migration to produce 3-hydroxy-3-methyl-2-ketobutyrate (HMKB). In the reductase reaction, this 2-ketoacid undergoes a metal-dependent reduction by NADPH to yield (R)-2,3-dihydroxy-isovalerate.</text>
</comment>
<comment type="catalytic activity">
    <reaction evidence="1">
        <text>(2R)-2,3-dihydroxy-3-methylbutanoate + NADP(+) = (2S)-2-acetolactate + NADPH + H(+)</text>
        <dbReference type="Rhea" id="RHEA:22068"/>
        <dbReference type="ChEBI" id="CHEBI:15378"/>
        <dbReference type="ChEBI" id="CHEBI:49072"/>
        <dbReference type="ChEBI" id="CHEBI:57783"/>
        <dbReference type="ChEBI" id="CHEBI:58349"/>
        <dbReference type="ChEBI" id="CHEBI:58476"/>
        <dbReference type="EC" id="1.1.1.86"/>
    </reaction>
</comment>
<comment type="catalytic activity">
    <reaction evidence="1">
        <text>(2R,3R)-2,3-dihydroxy-3-methylpentanoate + NADP(+) = (S)-2-ethyl-2-hydroxy-3-oxobutanoate + NADPH + H(+)</text>
        <dbReference type="Rhea" id="RHEA:13493"/>
        <dbReference type="ChEBI" id="CHEBI:15378"/>
        <dbReference type="ChEBI" id="CHEBI:49256"/>
        <dbReference type="ChEBI" id="CHEBI:49258"/>
        <dbReference type="ChEBI" id="CHEBI:57783"/>
        <dbReference type="ChEBI" id="CHEBI:58349"/>
        <dbReference type="EC" id="1.1.1.86"/>
    </reaction>
</comment>
<comment type="cofactor">
    <cofactor evidence="1">
        <name>Mg(2+)</name>
        <dbReference type="ChEBI" id="CHEBI:18420"/>
    </cofactor>
    <text evidence="1">Binds 2 magnesium ions per subunit.</text>
</comment>
<comment type="pathway">
    <text evidence="1">Amino-acid biosynthesis; L-isoleucine biosynthesis; L-isoleucine from 2-oxobutanoate: step 2/4.</text>
</comment>
<comment type="pathway">
    <text evidence="1">Amino-acid biosynthesis; L-valine biosynthesis; L-valine from pyruvate: step 2/4.</text>
</comment>
<comment type="similarity">
    <text evidence="1">Belongs to the ketol-acid reductoisomerase family.</text>
</comment>
<organism>
    <name type="scientific">Cenarchaeum symbiosum (strain A)</name>
    <dbReference type="NCBI Taxonomy" id="414004"/>
    <lineage>
        <taxon>Archaea</taxon>
        <taxon>Nitrososphaerota</taxon>
        <taxon>Candidatus Cenarchaeales</taxon>
        <taxon>Candidatus Cenarchaeaceae</taxon>
        <taxon>Candidatus Cenarchaeum</taxon>
    </lineage>
</organism>
<dbReference type="EC" id="1.1.1.86" evidence="1"/>
<dbReference type="EMBL" id="DP000238">
    <property type="protein sequence ID" value="ABK78008.1"/>
    <property type="molecule type" value="Genomic_DNA"/>
</dbReference>
<dbReference type="SMR" id="A0RXE1"/>
<dbReference type="STRING" id="414004.CENSYa_1385"/>
<dbReference type="EnsemblBacteria" id="ABK78008">
    <property type="protein sequence ID" value="ABK78008"/>
    <property type="gene ID" value="CENSYa_1385"/>
</dbReference>
<dbReference type="KEGG" id="csy:CENSYa_1385"/>
<dbReference type="PATRIC" id="fig|414004.10.peg.1269"/>
<dbReference type="HOGENOM" id="CLU_033821_0_1_2"/>
<dbReference type="UniPathway" id="UPA00047">
    <property type="reaction ID" value="UER00056"/>
</dbReference>
<dbReference type="UniPathway" id="UPA00049">
    <property type="reaction ID" value="UER00060"/>
</dbReference>
<dbReference type="Proteomes" id="UP000000758">
    <property type="component" value="Chromosome"/>
</dbReference>
<dbReference type="GO" id="GO:0004455">
    <property type="term" value="F:ketol-acid reductoisomerase activity"/>
    <property type="evidence" value="ECO:0007669"/>
    <property type="project" value="UniProtKB-UniRule"/>
</dbReference>
<dbReference type="GO" id="GO:0000287">
    <property type="term" value="F:magnesium ion binding"/>
    <property type="evidence" value="ECO:0007669"/>
    <property type="project" value="UniProtKB-UniRule"/>
</dbReference>
<dbReference type="GO" id="GO:0050661">
    <property type="term" value="F:NADP binding"/>
    <property type="evidence" value="ECO:0007669"/>
    <property type="project" value="InterPro"/>
</dbReference>
<dbReference type="GO" id="GO:0009097">
    <property type="term" value="P:isoleucine biosynthetic process"/>
    <property type="evidence" value="ECO:0007669"/>
    <property type="project" value="UniProtKB-UniRule"/>
</dbReference>
<dbReference type="GO" id="GO:0009099">
    <property type="term" value="P:L-valine biosynthetic process"/>
    <property type="evidence" value="ECO:0007669"/>
    <property type="project" value="UniProtKB-UniRule"/>
</dbReference>
<dbReference type="FunFam" id="3.40.50.720:FF:000023">
    <property type="entry name" value="Ketol-acid reductoisomerase (NADP(+))"/>
    <property type="match status" value="1"/>
</dbReference>
<dbReference type="Gene3D" id="6.10.240.10">
    <property type="match status" value="1"/>
</dbReference>
<dbReference type="Gene3D" id="3.40.50.720">
    <property type="entry name" value="NAD(P)-binding Rossmann-like Domain"/>
    <property type="match status" value="1"/>
</dbReference>
<dbReference type="HAMAP" id="MF_00435">
    <property type="entry name" value="IlvC"/>
    <property type="match status" value="1"/>
</dbReference>
<dbReference type="InterPro" id="IPR008927">
    <property type="entry name" value="6-PGluconate_DH-like_C_sf"/>
</dbReference>
<dbReference type="InterPro" id="IPR013023">
    <property type="entry name" value="KARI"/>
</dbReference>
<dbReference type="InterPro" id="IPR000506">
    <property type="entry name" value="KARI_C"/>
</dbReference>
<dbReference type="InterPro" id="IPR013116">
    <property type="entry name" value="KARI_N"/>
</dbReference>
<dbReference type="InterPro" id="IPR014359">
    <property type="entry name" value="KARI_prok"/>
</dbReference>
<dbReference type="InterPro" id="IPR036291">
    <property type="entry name" value="NAD(P)-bd_dom_sf"/>
</dbReference>
<dbReference type="NCBIfam" id="TIGR00465">
    <property type="entry name" value="ilvC"/>
    <property type="match status" value="1"/>
</dbReference>
<dbReference type="NCBIfam" id="NF004017">
    <property type="entry name" value="PRK05479.1"/>
    <property type="match status" value="1"/>
</dbReference>
<dbReference type="PANTHER" id="PTHR21371">
    <property type="entry name" value="KETOL-ACID REDUCTOISOMERASE, MITOCHONDRIAL"/>
    <property type="match status" value="1"/>
</dbReference>
<dbReference type="PANTHER" id="PTHR21371:SF1">
    <property type="entry name" value="KETOL-ACID REDUCTOISOMERASE, MITOCHONDRIAL"/>
    <property type="match status" value="1"/>
</dbReference>
<dbReference type="Pfam" id="PF01450">
    <property type="entry name" value="KARI_C"/>
    <property type="match status" value="1"/>
</dbReference>
<dbReference type="Pfam" id="PF07991">
    <property type="entry name" value="KARI_N"/>
    <property type="match status" value="1"/>
</dbReference>
<dbReference type="PIRSF" id="PIRSF000116">
    <property type="entry name" value="IlvC_gammaproteo"/>
    <property type="match status" value="1"/>
</dbReference>
<dbReference type="SUPFAM" id="SSF48179">
    <property type="entry name" value="6-phosphogluconate dehydrogenase C-terminal domain-like"/>
    <property type="match status" value="1"/>
</dbReference>
<dbReference type="SUPFAM" id="SSF51735">
    <property type="entry name" value="NAD(P)-binding Rossmann-fold domains"/>
    <property type="match status" value="1"/>
</dbReference>
<dbReference type="PROSITE" id="PS51851">
    <property type="entry name" value="KARI_C"/>
    <property type="match status" value="1"/>
</dbReference>
<dbReference type="PROSITE" id="PS51850">
    <property type="entry name" value="KARI_N"/>
    <property type="match status" value="1"/>
</dbReference>
<keyword id="KW-0028">Amino-acid biosynthesis</keyword>
<keyword id="KW-0100">Branched-chain amino acid biosynthesis</keyword>
<keyword id="KW-0460">Magnesium</keyword>
<keyword id="KW-0479">Metal-binding</keyword>
<keyword id="KW-0521">NADP</keyword>
<keyword id="KW-0560">Oxidoreductase</keyword>
<keyword id="KW-1185">Reference proteome</keyword>
<accession>A0RXE1</accession>
<feature type="chain" id="PRO_1000191024" description="Ketol-acid reductoisomerase (NADP(+))">
    <location>
        <begin position="1"/>
        <end position="332"/>
    </location>
</feature>
<feature type="domain" description="KARI N-terminal Rossmann" evidence="2">
    <location>
        <begin position="1"/>
        <end position="182"/>
    </location>
</feature>
<feature type="domain" description="KARI C-terminal knotted" evidence="3">
    <location>
        <begin position="183"/>
        <end position="329"/>
    </location>
</feature>
<feature type="active site" evidence="1">
    <location>
        <position position="108"/>
    </location>
</feature>
<feature type="binding site" evidence="1">
    <location>
        <begin position="25"/>
        <end position="28"/>
    </location>
    <ligand>
        <name>NADP(+)</name>
        <dbReference type="ChEBI" id="CHEBI:58349"/>
    </ligand>
</feature>
<feature type="binding site" evidence="1">
    <location>
        <position position="48"/>
    </location>
    <ligand>
        <name>NADP(+)</name>
        <dbReference type="ChEBI" id="CHEBI:58349"/>
    </ligand>
</feature>
<feature type="binding site" evidence="1">
    <location>
        <position position="53"/>
    </location>
    <ligand>
        <name>NADP(+)</name>
        <dbReference type="ChEBI" id="CHEBI:58349"/>
    </ligand>
</feature>
<feature type="binding site" evidence="1">
    <location>
        <begin position="83"/>
        <end position="86"/>
    </location>
    <ligand>
        <name>NADP(+)</name>
        <dbReference type="ChEBI" id="CHEBI:58349"/>
    </ligand>
</feature>
<feature type="binding site" evidence="1">
    <location>
        <position position="134"/>
    </location>
    <ligand>
        <name>NADP(+)</name>
        <dbReference type="ChEBI" id="CHEBI:58349"/>
    </ligand>
</feature>
<feature type="binding site" evidence="1">
    <location>
        <position position="191"/>
    </location>
    <ligand>
        <name>Mg(2+)</name>
        <dbReference type="ChEBI" id="CHEBI:18420"/>
        <label>1</label>
    </ligand>
</feature>
<feature type="binding site" evidence="1">
    <location>
        <position position="191"/>
    </location>
    <ligand>
        <name>Mg(2+)</name>
        <dbReference type="ChEBI" id="CHEBI:18420"/>
        <label>2</label>
    </ligand>
</feature>
<feature type="binding site" evidence="1">
    <location>
        <position position="195"/>
    </location>
    <ligand>
        <name>Mg(2+)</name>
        <dbReference type="ChEBI" id="CHEBI:18420"/>
        <label>1</label>
    </ligand>
</feature>
<feature type="binding site" evidence="1">
    <location>
        <position position="227"/>
    </location>
    <ligand>
        <name>Mg(2+)</name>
        <dbReference type="ChEBI" id="CHEBI:18420"/>
        <label>2</label>
    </ligand>
</feature>
<feature type="binding site" evidence="1">
    <location>
        <position position="231"/>
    </location>
    <ligand>
        <name>Mg(2+)</name>
        <dbReference type="ChEBI" id="CHEBI:18420"/>
        <label>2</label>
    </ligand>
</feature>
<feature type="binding site" evidence="1">
    <location>
        <position position="252"/>
    </location>
    <ligand>
        <name>substrate</name>
    </ligand>
</feature>
<protein>
    <recommendedName>
        <fullName evidence="1">Ketol-acid reductoisomerase (NADP(+))</fullName>
        <shortName evidence="1">KARI</shortName>
        <ecNumber evidence="1">1.1.1.86</ecNumber>
    </recommendedName>
    <alternativeName>
        <fullName evidence="1">Acetohydroxy-acid isomeroreductase</fullName>
        <shortName evidence="1">AHIR</shortName>
    </alternativeName>
    <alternativeName>
        <fullName evidence="1">Alpha-keto-beta-hydroxylacyl reductoisomerase</fullName>
    </alternativeName>
    <alternativeName>
        <fullName evidence="1">Ketol-acid reductoisomerase type 1</fullName>
    </alternativeName>
    <alternativeName>
        <fullName evidence="1">Ketol-acid reductoisomerase type I</fullName>
    </alternativeName>
</protein>